<gene>
    <name type="primary">ZNF420</name>
</gene>
<comment type="function">
    <text>May be involved in transcriptional regulation.</text>
</comment>
<comment type="subcellular location">
    <subcellularLocation>
        <location evidence="4">Nucleus</location>
    </subcellularLocation>
</comment>
<keyword id="KW-0238">DNA-binding</keyword>
<keyword id="KW-1017">Isopeptide bond</keyword>
<keyword id="KW-0479">Metal-binding</keyword>
<keyword id="KW-0539">Nucleus</keyword>
<keyword id="KW-1185">Reference proteome</keyword>
<keyword id="KW-0677">Repeat</keyword>
<keyword id="KW-0804">Transcription</keyword>
<keyword id="KW-0805">Transcription regulation</keyword>
<keyword id="KW-0832">Ubl conjugation</keyword>
<keyword id="KW-0862">Zinc</keyword>
<keyword id="KW-0863">Zinc-finger</keyword>
<dbReference type="EMBL" id="BC133352">
    <property type="protein sequence ID" value="AAI33353.1"/>
    <property type="molecule type" value="mRNA"/>
</dbReference>
<dbReference type="RefSeq" id="NP_001096022.1">
    <property type="nucleotide sequence ID" value="NM_001102552.1"/>
</dbReference>
<dbReference type="SMR" id="A2VDQ7"/>
<dbReference type="STRING" id="9913.ENSBTAP00000049685"/>
<dbReference type="PaxDb" id="9913-ENSBTAP00000049685"/>
<dbReference type="GeneID" id="100124518"/>
<dbReference type="KEGG" id="bta:100124518"/>
<dbReference type="CTD" id="147923"/>
<dbReference type="eggNOG" id="KOG1721">
    <property type="taxonomic scope" value="Eukaryota"/>
</dbReference>
<dbReference type="InParanoid" id="A2VDQ7"/>
<dbReference type="OrthoDB" id="9411774at2759"/>
<dbReference type="Proteomes" id="UP000009136">
    <property type="component" value="Unplaced"/>
</dbReference>
<dbReference type="GO" id="GO:0005634">
    <property type="term" value="C:nucleus"/>
    <property type="evidence" value="ECO:0000318"/>
    <property type="project" value="GO_Central"/>
</dbReference>
<dbReference type="GO" id="GO:0000981">
    <property type="term" value="F:DNA-binding transcription factor activity, RNA polymerase II-specific"/>
    <property type="evidence" value="ECO:0000318"/>
    <property type="project" value="GO_Central"/>
</dbReference>
<dbReference type="GO" id="GO:0000978">
    <property type="term" value="F:RNA polymerase II cis-regulatory region sequence-specific DNA binding"/>
    <property type="evidence" value="ECO:0000318"/>
    <property type="project" value="GO_Central"/>
</dbReference>
<dbReference type="GO" id="GO:0008270">
    <property type="term" value="F:zinc ion binding"/>
    <property type="evidence" value="ECO:0007669"/>
    <property type="project" value="UniProtKB-KW"/>
</dbReference>
<dbReference type="GO" id="GO:0006357">
    <property type="term" value="P:regulation of transcription by RNA polymerase II"/>
    <property type="evidence" value="ECO:0000318"/>
    <property type="project" value="GO_Central"/>
</dbReference>
<dbReference type="CDD" id="cd07765">
    <property type="entry name" value="KRAB_A-box"/>
    <property type="match status" value="1"/>
</dbReference>
<dbReference type="FunFam" id="3.30.160.60:FF:003025">
    <property type="match status" value="1"/>
</dbReference>
<dbReference type="FunFam" id="3.30.160.60:FF:000020">
    <property type="entry name" value="Zinc finger protein 14 homolog"/>
    <property type="match status" value="1"/>
</dbReference>
<dbReference type="FunFam" id="3.30.160.60:FF:001868">
    <property type="entry name" value="Zinc finger protein 264"/>
    <property type="match status" value="1"/>
</dbReference>
<dbReference type="FunFam" id="3.30.160.60:FF:000338">
    <property type="entry name" value="zinc finger protein 383"/>
    <property type="match status" value="2"/>
</dbReference>
<dbReference type="FunFam" id="3.30.160.60:FF:001780">
    <property type="entry name" value="zinc finger protein 420 isoform X1"/>
    <property type="match status" value="1"/>
</dbReference>
<dbReference type="FunFam" id="3.30.160.60:FF:001617">
    <property type="entry name" value="zinc finger protein 420 isoform X2"/>
    <property type="match status" value="1"/>
</dbReference>
<dbReference type="FunFam" id="3.30.160.60:FF:001910">
    <property type="entry name" value="zinc finger protein 420 isoform X3"/>
    <property type="match status" value="2"/>
</dbReference>
<dbReference type="FunFam" id="3.30.160.60:FF:002254">
    <property type="entry name" value="Zinc finger protein 540"/>
    <property type="match status" value="4"/>
</dbReference>
<dbReference type="FunFam" id="3.30.160.60:FF:000384">
    <property type="entry name" value="Zinc finger protein 550"/>
    <property type="match status" value="1"/>
</dbReference>
<dbReference type="FunFam" id="3.30.160.60:FF:000737">
    <property type="entry name" value="Zinc finger protein 565"/>
    <property type="match status" value="5"/>
</dbReference>
<dbReference type="Gene3D" id="6.10.140.140">
    <property type="match status" value="1"/>
</dbReference>
<dbReference type="Gene3D" id="3.30.160.60">
    <property type="entry name" value="Classic Zinc Finger"/>
    <property type="match status" value="19"/>
</dbReference>
<dbReference type="InterPro" id="IPR050589">
    <property type="entry name" value="Ikaros_C2H2-ZF"/>
</dbReference>
<dbReference type="InterPro" id="IPR001909">
    <property type="entry name" value="KRAB"/>
</dbReference>
<dbReference type="InterPro" id="IPR036051">
    <property type="entry name" value="KRAB_dom_sf"/>
</dbReference>
<dbReference type="InterPro" id="IPR036236">
    <property type="entry name" value="Znf_C2H2_sf"/>
</dbReference>
<dbReference type="InterPro" id="IPR013087">
    <property type="entry name" value="Znf_C2H2_type"/>
</dbReference>
<dbReference type="PANTHER" id="PTHR24404:SF107">
    <property type="entry name" value="ZFP2 ZINC FINGER PROTEIN"/>
    <property type="match status" value="1"/>
</dbReference>
<dbReference type="PANTHER" id="PTHR24404">
    <property type="entry name" value="ZINC FINGER PROTEIN"/>
    <property type="match status" value="1"/>
</dbReference>
<dbReference type="Pfam" id="PF01352">
    <property type="entry name" value="KRAB"/>
    <property type="match status" value="1"/>
</dbReference>
<dbReference type="Pfam" id="PF00096">
    <property type="entry name" value="zf-C2H2"/>
    <property type="match status" value="18"/>
</dbReference>
<dbReference type="SMART" id="SM00349">
    <property type="entry name" value="KRAB"/>
    <property type="match status" value="1"/>
</dbReference>
<dbReference type="SMART" id="SM00355">
    <property type="entry name" value="ZnF_C2H2"/>
    <property type="match status" value="19"/>
</dbReference>
<dbReference type="SUPFAM" id="SSF57667">
    <property type="entry name" value="beta-beta-alpha zinc fingers"/>
    <property type="match status" value="10"/>
</dbReference>
<dbReference type="SUPFAM" id="SSF109640">
    <property type="entry name" value="KRAB domain (Kruppel-associated box)"/>
    <property type="match status" value="1"/>
</dbReference>
<dbReference type="PROSITE" id="PS50805">
    <property type="entry name" value="KRAB"/>
    <property type="match status" value="1"/>
</dbReference>
<dbReference type="PROSITE" id="PS00028">
    <property type="entry name" value="ZINC_FINGER_C2H2_1"/>
    <property type="match status" value="19"/>
</dbReference>
<dbReference type="PROSITE" id="PS50157">
    <property type="entry name" value="ZINC_FINGER_C2H2_2"/>
    <property type="match status" value="19"/>
</dbReference>
<reference key="1">
    <citation type="submission" date="2007-02" db="EMBL/GenBank/DDBJ databases">
        <authorList>
            <consortium name="NIH - Mammalian Gene Collection (MGC) project"/>
        </authorList>
    </citation>
    <scope>NUCLEOTIDE SEQUENCE [LARGE SCALE MRNA]</scope>
    <source>
        <strain>Hereford</strain>
        <tissue>Hypothalamus</tissue>
    </source>
</reference>
<sequence length="687" mass="79571">MAQRSVMFRDVAIDFSQEEWDCLDSAQRDLYRDVMLENYSNLVSLDLPSRGANKLLSPKKDIYETGLSQWEMSARLENCDLENSSSRDYLEVKGTLEKQQENQAYFSQGMIIYDNMSIFNQHAYLSQHPRCHSTEKPYKCKECGKAFRRASHLTQHQSIHTGEKPYECKQCGKAFSRDSQLSLHQRLHTGEKPYACKECGKAFTQSSQLILHHRIHTGEKPYKCEECGKAFIRSSQLTRHQKVHTGEKPYECKECGKAFTQNSQLTLHQRLHTGEKLYECKECRKVFTQLSQLILHKRIHTGEKPYECKECGKAFICGSQLSQHQKIHNGEKPYECQECGKAFIRGSLLMQHQRIHTGEKPYKCEECGKAFIRGSQLTQHQRIHTNEKPYECKECGKTFSHGSQLTQHQRIHTGEKPYQCKECGKAFNRGSLLTRHQRIHTGEKPYECKECGKTFSRGSELTQHERIHTGEKPYECKECGKSFIRGSQLTQHQRIHTGEKPYECKECRMAFTQSSHLSQHQRLHTGEKPYVCNECGKAFARGLLLIQHQRIHTGEKPYQCKECGKAFIRGSQLTQHQRIHTGEKPYGCKECGKAFSHGSQLTLHQRIHTGEKPYECKECRKAFTQSSHLSRHQRVHTGEKPYQCRECGKAFTRGSQLTQHQRIHISEKSFAYKECGIDFSHDSQVYI</sequence>
<name>ZN420_BOVIN</name>
<feature type="chain" id="PRO_0000347241" description="Zinc finger protein 420">
    <location>
        <begin position="1"/>
        <end position="687"/>
    </location>
</feature>
<feature type="domain" description="KRAB" evidence="3">
    <location>
        <begin position="6"/>
        <end position="95"/>
    </location>
</feature>
<feature type="zinc finger region" description="C2H2-type 1" evidence="2">
    <location>
        <begin position="138"/>
        <end position="160"/>
    </location>
</feature>
<feature type="zinc finger region" description="C2H2-type 2" evidence="2">
    <location>
        <begin position="166"/>
        <end position="188"/>
    </location>
</feature>
<feature type="zinc finger region" description="C2H2-type 3" evidence="2">
    <location>
        <begin position="194"/>
        <end position="216"/>
    </location>
</feature>
<feature type="zinc finger region" description="C2H2-type 4" evidence="2">
    <location>
        <begin position="222"/>
        <end position="244"/>
    </location>
</feature>
<feature type="zinc finger region" description="C2H2-type 5" evidence="2">
    <location>
        <begin position="250"/>
        <end position="272"/>
    </location>
</feature>
<feature type="zinc finger region" description="C2H2-type 6" evidence="2">
    <location>
        <begin position="278"/>
        <end position="300"/>
    </location>
</feature>
<feature type="zinc finger region" description="C2H2-type 7" evidence="2">
    <location>
        <begin position="306"/>
        <end position="328"/>
    </location>
</feature>
<feature type="zinc finger region" description="C2H2-type 8" evidence="2">
    <location>
        <begin position="334"/>
        <end position="356"/>
    </location>
</feature>
<feature type="zinc finger region" description="C2H2-type 9" evidence="2">
    <location>
        <begin position="362"/>
        <end position="384"/>
    </location>
</feature>
<feature type="zinc finger region" description="C2H2-type 10" evidence="2">
    <location>
        <begin position="390"/>
        <end position="412"/>
    </location>
</feature>
<feature type="zinc finger region" description="C2H2-type 11" evidence="2">
    <location>
        <begin position="418"/>
        <end position="440"/>
    </location>
</feature>
<feature type="zinc finger region" description="C2H2-type 12" evidence="2">
    <location>
        <begin position="446"/>
        <end position="468"/>
    </location>
</feature>
<feature type="zinc finger region" description="C2H2-type 13" evidence="2">
    <location>
        <begin position="474"/>
        <end position="496"/>
    </location>
</feature>
<feature type="zinc finger region" description="C2H2-type 14" evidence="2">
    <location>
        <begin position="502"/>
        <end position="524"/>
    </location>
</feature>
<feature type="zinc finger region" description="C2H2-type 15" evidence="2">
    <location>
        <begin position="530"/>
        <end position="552"/>
    </location>
</feature>
<feature type="zinc finger region" description="C2H2-type 16" evidence="2">
    <location>
        <begin position="558"/>
        <end position="580"/>
    </location>
</feature>
<feature type="zinc finger region" description="C2H2-type 17" evidence="2">
    <location>
        <begin position="586"/>
        <end position="608"/>
    </location>
</feature>
<feature type="zinc finger region" description="C2H2-type 18" evidence="2">
    <location>
        <begin position="614"/>
        <end position="636"/>
    </location>
</feature>
<feature type="zinc finger region" description="C2H2-type 19" evidence="2">
    <location>
        <begin position="642"/>
        <end position="664"/>
    </location>
</feature>
<feature type="cross-link" description="Glycyl lysine isopeptide (Lys-Gly) (interchain with G-Cter in SUMO2)" evidence="1">
    <location>
        <position position="297"/>
    </location>
</feature>
<organism>
    <name type="scientific">Bos taurus</name>
    <name type="common">Bovine</name>
    <dbReference type="NCBI Taxonomy" id="9913"/>
    <lineage>
        <taxon>Eukaryota</taxon>
        <taxon>Metazoa</taxon>
        <taxon>Chordata</taxon>
        <taxon>Craniata</taxon>
        <taxon>Vertebrata</taxon>
        <taxon>Euteleostomi</taxon>
        <taxon>Mammalia</taxon>
        <taxon>Eutheria</taxon>
        <taxon>Laurasiatheria</taxon>
        <taxon>Artiodactyla</taxon>
        <taxon>Ruminantia</taxon>
        <taxon>Pecora</taxon>
        <taxon>Bovidae</taxon>
        <taxon>Bovinae</taxon>
        <taxon>Bos</taxon>
    </lineage>
</organism>
<proteinExistence type="evidence at transcript level"/>
<evidence type="ECO:0000250" key="1">
    <source>
        <dbReference type="UniProtKB" id="Q8TAQ5"/>
    </source>
</evidence>
<evidence type="ECO:0000255" key="2">
    <source>
        <dbReference type="PROSITE-ProRule" id="PRU00042"/>
    </source>
</evidence>
<evidence type="ECO:0000255" key="3">
    <source>
        <dbReference type="PROSITE-ProRule" id="PRU00119"/>
    </source>
</evidence>
<evidence type="ECO:0000305" key="4"/>
<protein>
    <recommendedName>
        <fullName>Zinc finger protein 420</fullName>
    </recommendedName>
</protein>
<accession>A2VDQ7</accession>